<sequence>MAVTKLVLVRHGESQWNKENRFTGWYDVDLSEKGVSEAKAAGKLLKEEGYSFDFAYTSVLKRAIHTLWNVLDELDQAWLPVEKSWKLNERHYGALQGLNKAETAEKYGDEQVKQWRRGFAVTPPELTKDDERYPGHDPRYAKLSEKELPLTESLALTIDRVIPYWNETILPRMKSGERVIIAAHGNSLRALVKYLDNMSEEEILELNIPTGVPLVYEFDENFKPLKRYYLGNADEIAAKAAAVANQGKAK</sequence>
<comment type="function">
    <text evidence="1">Catalyzes the interconversion of 2-phosphoglycerate and 3-phosphoglycerate.</text>
</comment>
<comment type="catalytic activity">
    <reaction evidence="1">
        <text>(2R)-2-phosphoglycerate = (2R)-3-phosphoglycerate</text>
        <dbReference type="Rhea" id="RHEA:15901"/>
        <dbReference type="ChEBI" id="CHEBI:58272"/>
        <dbReference type="ChEBI" id="CHEBI:58289"/>
        <dbReference type="EC" id="5.4.2.11"/>
    </reaction>
</comment>
<comment type="pathway">
    <text evidence="1">Carbohydrate degradation; glycolysis; pyruvate from D-glyceraldehyde 3-phosphate: step 3/5.</text>
</comment>
<comment type="subunit">
    <text evidence="1">Homodimer.</text>
</comment>
<comment type="similarity">
    <text evidence="1">Belongs to the phosphoglycerate mutase family. BPG-dependent PGAM subfamily.</text>
</comment>
<feature type="chain" id="PRO_1000135953" description="2,3-bisphosphoglycerate-dependent phosphoglycerate mutase">
    <location>
        <begin position="1"/>
        <end position="250"/>
    </location>
</feature>
<feature type="active site" description="Tele-phosphohistidine intermediate" evidence="1">
    <location>
        <position position="11"/>
    </location>
</feature>
<feature type="active site" description="Proton donor/acceptor" evidence="1">
    <location>
        <position position="89"/>
    </location>
</feature>
<feature type="binding site" evidence="1">
    <location>
        <begin position="10"/>
        <end position="17"/>
    </location>
    <ligand>
        <name>substrate</name>
    </ligand>
</feature>
<feature type="binding site" evidence="1">
    <location>
        <begin position="23"/>
        <end position="24"/>
    </location>
    <ligand>
        <name>substrate</name>
    </ligand>
</feature>
<feature type="binding site" evidence="1">
    <location>
        <position position="62"/>
    </location>
    <ligand>
        <name>substrate</name>
    </ligand>
</feature>
<feature type="binding site" evidence="1">
    <location>
        <begin position="89"/>
        <end position="92"/>
    </location>
    <ligand>
        <name>substrate</name>
    </ligand>
</feature>
<feature type="binding site" evidence="1">
    <location>
        <position position="100"/>
    </location>
    <ligand>
        <name>substrate</name>
    </ligand>
</feature>
<feature type="binding site" evidence="1">
    <location>
        <begin position="116"/>
        <end position="117"/>
    </location>
    <ligand>
        <name>substrate</name>
    </ligand>
</feature>
<feature type="binding site" evidence="1">
    <location>
        <begin position="185"/>
        <end position="186"/>
    </location>
    <ligand>
        <name>substrate</name>
    </ligand>
</feature>
<feature type="site" description="Transition state stabilizer" evidence="1">
    <location>
        <position position="184"/>
    </location>
</feature>
<accession>B7LK04</accession>
<organism>
    <name type="scientific">Escherichia fergusonii (strain ATCC 35469 / DSM 13698 / CCUG 18766 / IAM 14443 / JCM 21226 / LMG 7866 / NBRC 102419 / NCTC 12128 / CDC 0568-73)</name>
    <dbReference type="NCBI Taxonomy" id="585054"/>
    <lineage>
        <taxon>Bacteria</taxon>
        <taxon>Pseudomonadati</taxon>
        <taxon>Pseudomonadota</taxon>
        <taxon>Gammaproteobacteria</taxon>
        <taxon>Enterobacterales</taxon>
        <taxon>Enterobacteriaceae</taxon>
        <taxon>Escherichia</taxon>
    </lineage>
</organism>
<dbReference type="EC" id="5.4.2.11" evidence="1"/>
<dbReference type="EMBL" id="CU928158">
    <property type="protein sequence ID" value="CAQ89854.1"/>
    <property type="molecule type" value="Genomic_DNA"/>
</dbReference>
<dbReference type="RefSeq" id="WP_001295305.1">
    <property type="nucleotide sequence ID" value="NC_011740.1"/>
</dbReference>
<dbReference type="SMR" id="B7LK04"/>
<dbReference type="GeneID" id="93776726"/>
<dbReference type="KEGG" id="efe:EFER_2354"/>
<dbReference type="HOGENOM" id="CLU_033323_1_1_6"/>
<dbReference type="OrthoDB" id="9781415at2"/>
<dbReference type="UniPathway" id="UPA00109">
    <property type="reaction ID" value="UER00186"/>
</dbReference>
<dbReference type="Proteomes" id="UP000000745">
    <property type="component" value="Chromosome"/>
</dbReference>
<dbReference type="GO" id="GO:0004619">
    <property type="term" value="F:phosphoglycerate mutase activity"/>
    <property type="evidence" value="ECO:0007669"/>
    <property type="project" value="UniProtKB-EC"/>
</dbReference>
<dbReference type="GO" id="GO:0006094">
    <property type="term" value="P:gluconeogenesis"/>
    <property type="evidence" value="ECO:0007669"/>
    <property type="project" value="UniProtKB-UniRule"/>
</dbReference>
<dbReference type="GO" id="GO:0006096">
    <property type="term" value="P:glycolytic process"/>
    <property type="evidence" value="ECO:0007669"/>
    <property type="project" value="UniProtKB-UniRule"/>
</dbReference>
<dbReference type="CDD" id="cd07067">
    <property type="entry name" value="HP_PGM_like"/>
    <property type="match status" value="1"/>
</dbReference>
<dbReference type="FunFam" id="3.40.50.1240:FF:000003">
    <property type="entry name" value="2,3-bisphosphoglycerate-dependent phosphoglycerate mutase"/>
    <property type="match status" value="1"/>
</dbReference>
<dbReference type="Gene3D" id="3.40.50.1240">
    <property type="entry name" value="Phosphoglycerate mutase-like"/>
    <property type="match status" value="1"/>
</dbReference>
<dbReference type="HAMAP" id="MF_01039">
    <property type="entry name" value="PGAM_GpmA"/>
    <property type="match status" value="1"/>
</dbReference>
<dbReference type="InterPro" id="IPR013078">
    <property type="entry name" value="His_Pase_superF_clade-1"/>
</dbReference>
<dbReference type="InterPro" id="IPR029033">
    <property type="entry name" value="His_PPase_superfam"/>
</dbReference>
<dbReference type="InterPro" id="IPR001345">
    <property type="entry name" value="PG/BPGM_mutase_AS"/>
</dbReference>
<dbReference type="InterPro" id="IPR005952">
    <property type="entry name" value="Phosphogly_mut1"/>
</dbReference>
<dbReference type="NCBIfam" id="TIGR01258">
    <property type="entry name" value="pgm_1"/>
    <property type="match status" value="1"/>
</dbReference>
<dbReference type="NCBIfam" id="NF010713">
    <property type="entry name" value="PRK14115.1"/>
    <property type="match status" value="1"/>
</dbReference>
<dbReference type="PANTHER" id="PTHR11931">
    <property type="entry name" value="PHOSPHOGLYCERATE MUTASE"/>
    <property type="match status" value="1"/>
</dbReference>
<dbReference type="Pfam" id="PF00300">
    <property type="entry name" value="His_Phos_1"/>
    <property type="match status" value="1"/>
</dbReference>
<dbReference type="PIRSF" id="PIRSF000709">
    <property type="entry name" value="6PFK_2-Ptase"/>
    <property type="match status" value="1"/>
</dbReference>
<dbReference type="SMART" id="SM00855">
    <property type="entry name" value="PGAM"/>
    <property type="match status" value="1"/>
</dbReference>
<dbReference type="SUPFAM" id="SSF53254">
    <property type="entry name" value="Phosphoglycerate mutase-like"/>
    <property type="match status" value="1"/>
</dbReference>
<dbReference type="PROSITE" id="PS00175">
    <property type="entry name" value="PG_MUTASE"/>
    <property type="match status" value="1"/>
</dbReference>
<keyword id="KW-0312">Gluconeogenesis</keyword>
<keyword id="KW-0324">Glycolysis</keyword>
<keyword id="KW-0413">Isomerase</keyword>
<proteinExistence type="inferred from homology"/>
<reference key="1">
    <citation type="journal article" date="2009" name="PLoS Genet.">
        <title>Organised genome dynamics in the Escherichia coli species results in highly diverse adaptive paths.</title>
        <authorList>
            <person name="Touchon M."/>
            <person name="Hoede C."/>
            <person name="Tenaillon O."/>
            <person name="Barbe V."/>
            <person name="Baeriswyl S."/>
            <person name="Bidet P."/>
            <person name="Bingen E."/>
            <person name="Bonacorsi S."/>
            <person name="Bouchier C."/>
            <person name="Bouvet O."/>
            <person name="Calteau A."/>
            <person name="Chiapello H."/>
            <person name="Clermont O."/>
            <person name="Cruveiller S."/>
            <person name="Danchin A."/>
            <person name="Diard M."/>
            <person name="Dossat C."/>
            <person name="Karoui M.E."/>
            <person name="Frapy E."/>
            <person name="Garry L."/>
            <person name="Ghigo J.M."/>
            <person name="Gilles A.M."/>
            <person name="Johnson J."/>
            <person name="Le Bouguenec C."/>
            <person name="Lescat M."/>
            <person name="Mangenot S."/>
            <person name="Martinez-Jehanne V."/>
            <person name="Matic I."/>
            <person name="Nassif X."/>
            <person name="Oztas S."/>
            <person name="Petit M.A."/>
            <person name="Pichon C."/>
            <person name="Rouy Z."/>
            <person name="Ruf C.S."/>
            <person name="Schneider D."/>
            <person name="Tourret J."/>
            <person name="Vacherie B."/>
            <person name="Vallenet D."/>
            <person name="Medigue C."/>
            <person name="Rocha E.P.C."/>
            <person name="Denamur E."/>
        </authorList>
    </citation>
    <scope>NUCLEOTIDE SEQUENCE [LARGE SCALE GENOMIC DNA]</scope>
    <source>
        <strain>ATCC 35469 / DSM 13698 / BCRC 15582 / CCUG 18766 / IAM 14443 / JCM 21226 / LMG 7866 / NBRC 102419 / NCTC 12128 / CDC 0568-73</strain>
    </source>
</reference>
<gene>
    <name evidence="1" type="primary">gpmA</name>
    <name type="ordered locus">EFER_2354</name>
</gene>
<name>GPMA_ESCF3</name>
<evidence type="ECO:0000255" key="1">
    <source>
        <dbReference type="HAMAP-Rule" id="MF_01039"/>
    </source>
</evidence>
<protein>
    <recommendedName>
        <fullName evidence="1">2,3-bisphosphoglycerate-dependent phosphoglycerate mutase</fullName>
        <shortName evidence="1">BPG-dependent PGAM</shortName>
        <shortName evidence="1">PGAM</shortName>
        <shortName evidence="1">Phosphoglyceromutase</shortName>
        <shortName evidence="1">dPGM</shortName>
        <ecNumber evidence="1">5.4.2.11</ecNumber>
    </recommendedName>
</protein>